<reference key="1">
    <citation type="journal article" date="2005" name="Infect. Immun.">
        <title>A metalloproteinase of Coccidioides posadasii contributes to evasion of host detection.</title>
        <authorList>
            <person name="Hung C.Y."/>
            <person name="Seshan K.R."/>
            <person name="Yu J.J."/>
            <person name="Schaller R."/>
            <person name="Xue J."/>
            <person name="Basrur V."/>
            <person name="Gardner M.J."/>
            <person name="Cole G.T."/>
        </authorList>
    </citation>
    <scope>NUCLEOTIDE SEQUENCE [GENOMIC DNA]</scope>
    <source>
        <strain>C735</strain>
    </source>
</reference>
<reference key="2">
    <citation type="journal article" date="2009" name="Genome Res.">
        <title>Comparative genomic analyses of the human fungal pathogens Coccidioides and their relatives.</title>
        <authorList>
            <person name="Sharpton T.J."/>
            <person name="Stajich J.E."/>
            <person name="Rounsley S.D."/>
            <person name="Gardner M.J."/>
            <person name="Wortman J.R."/>
            <person name="Jordar V.S."/>
            <person name="Maiti R."/>
            <person name="Kodira C.D."/>
            <person name="Neafsey D.E."/>
            <person name="Zeng Q."/>
            <person name="Hung C.-Y."/>
            <person name="McMahan C."/>
            <person name="Muszewska A."/>
            <person name="Grynberg M."/>
            <person name="Mandel M.A."/>
            <person name="Kellner E.M."/>
            <person name="Barker B.M."/>
            <person name="Galgiani J.N."/>
            <person name="Orbach M.J."/>
            <person name="Kirkland T.N."/>
            <person name="Cole G.T."/>
            <person name="Henn M.R."/>
            <person name="Birren B.W."/>
            <person name="Taylor J.W."/>
        </authorList>
    </citation>
    <scope>NUCLEOTIDE SEQUENCE [LARGE SCALE GENOMIC DNA]</scope>
    <source>
        <strain>C735</strain>
    </source>
</reference>
<proteinExistence type="inferred from homology"/>
<comment type="function">
    <text evidence="1">Secreted metalloproteinase that allows assimilation of proteinaceous substrates and probably acts as a virulence factor.</text>
</comment>
<comment type="cofactor">
    <cofactor evidence="1">
        <name>Zn(2+)</name>
        <dbReference type="ChEBI" id="CHEBI:29105"/>
    </cofactor>
    <text evidence="1">Binds 1 zinc ion per subunit.</text>
</comment>
<comment type="subcellular location">
    <subcellularLocation>
        <location evidence="1">Secreted</location>
    </subcellularLocation>
</comment>
<comment type="similarity">
    <text evidence="5">Belongs to the peptidase M36 family.</text>
</comment>
<comment type="sequence caution" evidence="5">
    <conflict type="erroneous gene model prediction">
        <sequence resource="EMBL-CDS" id="AAY45759"/>
    </conflict>
</comment>
<evidence type="ECO:0000250" key="1"/>
<evidence type="ECO:0000255" key="2"/>
<evidence type="ECO:0000255" key="3">
    <source>
        <dbReference type="PROSITE-ProRule" id="PRU10095"/>
    </source>
</evidence>
<evidence type="ECO:0000256" key="4">
    <source>
        <dbReference type="SAM" id="MobiDB-lite"/>
    </source>
</evidence>
<evidence type="ECO:0000305" key="5"/>
<protein>
    <recommendedName>
        <fullName>Extracellular metalloproteinase 9</fullName>
        <ecNumber>3.4.24.-</ecNumber>
    </recommendedName>
    <alternativeName>
        <fullName>Elastinolytic metalloproteinase MEP9</fullName>
    </alternativeName>
    <alternativeName>
        <fullName>Fungalysin MEP9</fullName>
    </alternativeName>
</protein>
<feature type="signal peptide" evidence="2">
    <location>
        <begin position="1"/>
        <end position="19"/>
    </location>
</feature>
<feature type="propeptide" id="PRO_0000407170" evidence="1">
    <location>
        <begin position="20"/>
        <end position="250"/>
    </location>
</feature>
<feature type="chain" id="PRO_0000407171" description="Extracellular metalloproteinase 9">
    <location>
        <begin position="251"/>
        <end position="639"/>
    </location>
</feature>
<feature type="region of interest" description="Disordered" evidence="4">
    <location>
        <begin position="293"/>
        <end position="312"/>
    </location>
</feature>
<feature type="active site" evidence="3">
    <location>
        <position position="435"/>
    </location>
</feature>
<feature type="binding site" evidence="3">
    <location>
        <position position="434"/>
    </location>
    <ligand>
        <name>Zn(2+)</name>
        <dbReference type="ChEBI" id="CHEBI:29105"/>
        <note>catalytic</note>
    </ligand>
</feature>
<feature type="binding site" evidence="3">
    <location>
        <position position="438"/>
    </location>
    <ligand>
        <name>Zn(2+)</name>
        <dbReference type="ChEBI" id="CHEBI:29105"/>
        <note>catalytic</note>
    </ligand>
</feature>
<feature type="glycosylation site" description="N-linked (GlcNAc...) asparagine" evidence="2">
    <location>
        <position position="278"/>
    </location>
</feature>
<gene>
    <name type="primary">MEP9</name>
    <name type="ORF">CPC735_012920</name>
</gene>
<sequence>MHGLLLAAGLLSLPLRALGHPNPNPQMHTLSRRGAVDLDAFRLGQNAEYSNTASVASNPPALSIRSTQSYVDVAKDLVKTTLPDATFRVVNDHYVGTNGVAHVHLRQTVHGIDVDNADFNVNVKDGKVFSFGNSFYKGKIPEENPMVKRDHADPVKALKGVVSALKLPVKTEKASAAISAQSQGQDAVVFKGTSGALSDPKGELVYLIKPDGELSLTWKVETDVGDNWLLSYIDAKDGKNIHGVVDYVADATYQVYPWGINDPTEGEREVFTDPWDGNASEFTWISDGRTRYPTTRGNNGIAQDNPSGGNQYENNYRPMSDDLRFEYPYSTDMSPPDSYIDASITQLFYTANVYHDLLYILGFTERAGNFEYNNNNQGGRGNDYVILNSQDGSGTNNANFATPPDGQPGRMRMYTWTTSRPNRDGSFEAGIVIHEYTHGLSNRLCGGPSNSRCLNALESGGMGEGWGDFMATAIRLKAGDTRETDYTMGEWAANQQGGIRQHPYSTNLQTNPLVYTTVNQYREVHDIGTVWASMLYEVLWNLIDKHGKNDGPKPELRDGVPTDGKYLTMKLVIDGMALQPCNPNFVQARDAILDADEALTGGENKCEIWAGFAKRELGTGARYDRSRRTGSTDVPQECQ</sequence>
<name>MEP9_COCP7</name>
<dbReference type="EC" id="3.4.24.-"/>
<dbReference type="EMBL" id="AY987813">
    <property type="protein sequence ID" value="AAY45759.1"/>
    <property type="status" value="ALT_SEQ"/>
    <property type="molecule type" value="Genomic_DNA"/>
</dbReference>
<dbReference type="EMBL" id="ACFW01000001">
    <property type="protein sequence ID" value="EER29974.1"/>
    <property type="molecule type" value="Genomic_DNA"/>
</dbReference>
<dbReference type="RefSeq" id="XP_003072119.1">
    <property type="nucleotide sequence ID" value="XM_003072073.1"/>
</dbReference>
<dbReference type="SMR" id="C5NZT1"/>
<dbReference type="MEROPS" id="M36.001"/>
<dbReference type="GlyCosmos" id="C5NZT1">
    <property type="glycosylation" value="1 site, No reported glycans"/>
</dbReference>
<dbReference type="GeneID" id="9697614"/>
<dbReference type="KEGG" id="cpw:9697614"/>
<dbReference type="VEuPathDB" id="FungiDB:CPC735_012920"/>
<dbReference type="HOGENOM" id="CLU_012703_3_0_1"/>
<dbReference type="OrthoDB" id="3227768at2759"/>
<dbReference type="Proteomes" id="UP000009084">
    <property type="component" value="Unassembled WGS sequence"/>
</dbReference>
<dbReference type="GO" id="GO:0005576">
    <property type="term" value="C:extracellular region"/>
    <property type="evidence" value="ECO:0007669"/>
    <property type="project" value="UniProtKB-SubCell"/>
</dbReference>
<dbReference type="GO" id="GO:0004222">
    <property type="term" value="F:metalloendopeptidase activity"/>
    <property type="evidence" value="ECO:0007669"/>
    <property type="project" value="InterPro"/>
</dbReference>
<dbReference type="GO" id="GO:0008270">
    <property type="term" value="F:zinc ion binding"/>
    <property type="evidence" value="ECO:0007669"/>
    <property type="project" value="InterPro"/>
</dbReference>
<dbReference type="GO" id="GO:0006508">
    <property type="term" value="P:proteolysis"/>
    <property type="evidence" value="ECO:0007669"/>
    <property type="project" value="UniProtKB-KW"/>
</dbReference>
<dbReference type="CDD" id="cd09596">
    <property type="entry name" value="M36"/>
    <property type="match status" value="1"/>
</dbReference>
<dbReference type="Gene3D" id="3.10.170.10">
    <property type="match status" value="1"/>
</dbReference>
<dbReference type="Gene3D" id="1.10.390.10">
    <property type="entry name" value="Neutral Protease Domain 2"/>
    <property type="match status" value="1"/>
</dbReference>
<dbReference type="InterPro" id="IPR011096">
    <property type="entry name" value="FTP_domain"/>
</dbReference>
<dbReference type="InterPro" id="IPR050371">
    <property type="entry name" value="Fungal_virulence_M36"/>
</dbReference>
<dbReference type="InterPro" id="IPR001842">
    <property type="entry name" value="Peptidase_M36"/>
</dbReference>
<dbReference type="InterPro" id="IPR027268">
    <property type="entry name" value="Peptidase_M4/M1_CTD_sf"/>
</dbReference>
<dbReference type="PANTHER" id="PTHR33478">
    <property type="entry name" value="EXTRACELLULAR METALLOPROTEINASE MEP"/>
    <property type="match status" value="1"/>
</dbReference>
<dbReference type="PANTHER" id="PTHR33478:SF1">
    <property type="entry name" value="EXTRACELLULAR METALLOPROTEINASE MEP"/>
    <property type="match status" value="1"/>
</dbReference>
<dbReference type="Pfam" id="PF07504">
    <property type="entry name" value="FTP"/>
    <property type="match status" value="1"/>
</dbReference>
<dbReference type="Pfam" id="PF02128">
    <property type="entry name" value="Peptidase_M36"/>
    <property type="match status" value="1"/>
</dbReference>
<dbReference type="PRINTS" id="PR00999">
    <property type="entry name" value="FUNGALYSIN"/>
</dbReference>
<dbReference type="SUPFAM" id="SSF55486">
    <property type="entry name" value="Metalloproteases ('zincins'), catalytic domain"/>
    <property type="match status" value="1"/>
</dbReference>
<dbReference type="PROSITE" id="PS00142">
    <property type="entry name" value="ZINC_PROTEASE"/>
    <property type="match status" value="1"/>
</dbReference>
<organism>
    <name type="scientific">Coccidioides posadasii (strain C735)</name>
    <name type="common">Valley fever fungus</name>
    <dbReference type="NCBI Taxonomy" id="222929"/>
    <lineage>
        <taxon>Eukaryota</taxon>
        <taxon>Fungi</taxon>
        <taxon>Dikarya</taxon>
        <taxon>Ascomycota</taxon>
        <taxon>Pezizomycotina</taxon>
        <taxon>Eurotiomycetes</taxon>
        <taxon>Eurotiomycetidae</taxon>
        <taxon>Onygenales</taxon>
        <taxon>Onygenaceae</taxon>
        <taxon>Coccidioides</taxon>
    </lineage>
</organism>
<keyword id="KW-0325">Glycoprotein</keyword>
<keyword id="KW-0378">Hydrolase</keyword>
<keyword id="KW-0479">Metal-binding</keyword>
<keyword id="KW-0482">Metalloprotease</keyword>
<keyword id="KW-0645">Protease</keyword>
<keyword id="KW-0964">Secreted</keyword>
<keyword id="KW-0732">Signal</keyword>
<keyword id="KW-0843">Virulence</keyword>
<keyword id="KW-0862">Zinc</keyword>
<keyword id="KW-0865">Zymogen</keyword>
<accession>C5NZT1</accession>
<accession>Q3KRQ4</accession>